<gene>
    <name evidence="1" type="primary">glgA</name>
    <name type="ordered locus">Pden_4426</name>
</gene>
<keyword id="KW-0320">Glycogen biosynthesis</keyword>
<keyword id="KW-0328">Glycosyltransferase</keyword>
<keyword id="KW-1185">Reference proteome</keyword>
<keyword id="KW-0808">Transferase</keyword>
<proteinExistence type="inferred from homology"/>
<evidence type="ECO:0000255" key="1">
    <source>
        <dbReference type="HAMAP-Rule" id="MF_00484"/>
    </source>
</evidence>
<accession>A1BAE6</accession>
<name>GLGA_PARDP</name>
<reference key="1">
    <citation type="submission" date="2006-12" db="EMBL/GenBank/DDBJ databases">
        <title>Complete sequence of chromosome 2 of Paracoccus denitrificans PD1222.</title>
        <authorList>
            <person name="Copeland A."/>
            <person name="Lucas S."/>
            <person name="Lapidus A."/>
            <person name="Barry K."/>
            <person name="Detter J.C."/>
            <person name="Glavina del Rio T."/>
            <person name="Hammon N."/>
            <person name="Israni S."/>
            <person name="Dalin E."/>
            <person name="Tice H."/>
            <person name="Pitluck S."/>
            <person name="Munk A.C."/>
            <person name="Brettin T."/>
            <person name="Bruce D."/>
            <person name="Han C."/>
            <person name="Tapia R."/>
            <person name="Gilna P."/>
            <person name="Schmutz J."/>
            <person name="Larimer F."/>
            <person name="Land M."/>
            <person name="Hauser L."/>
            <person name="Kyrpides N."/>
            <person name="Lykidis A."/>
            <person name="Spiro S."/>
            <person name="Richardson D.J."/>
            <person name="Moir J.W.B."/>
            <person name="Ferguson S.J."/>
            <person name="van Spanning R.J.M."/>
            <person name="Richardson P."/>
        </authorList>
    </citation>
    <scope>NUCLEOTIDE SEQUENCE [LARGE SCALE GENOMIC DNA]</scope>
    <source>
        <strain>Pd 1222</strain>
    </source>
</reference>
<protein>
    <recommendedName>
        <fullName evidence="1">Glycogen synthase</fullName>
        <ecNumber evidence="1">2.4.1.21</ecNumber>
    </recommendedName>
    <alternativeName>
        <fullName evidence="1">Starch [bacterial glycogen] synthase</fullName>
    </alternativeName>
</protein>
<comment type="function">
    <text evidence="1">Synthesizes alpha-1,4-glucan chains using ADP-glucose.</text>
</comment>
<comment type="catalytic activity">
    <reaction evidence="1">
        <text>[(1-&gt;4)-alpha-D-glucosyl](n) + ADP-alpha-D-glucose = [(1-&gt;4)-alpha-D-glucosyl](n+1) + ADP + H(+)</text>
        <dbReference type="Rhea" id="RHEA:18189"/>
        <dbReference type="Rhea" id="RHEA-COMP:9584"/>
        <dbReference type="Rhea" id="RHEA-COMP:9587"/>
        <dbReference type="ChEBI" id="CHEBI:15378"/>
        <dbReference type="ChEBI" id="CHEBI:15444"/>
        <dbReference type="ChEBI" id="CHEBI:57498"/>
        <dbReference type="ChEBI" id="CHEBI:456216"/>
        <dbReference type="EC" id="2.4.1.21"/>
    </reaction>
</comment>
<comment type="pathway">
    <text evidence="1">Glycan biosynthesis; glycogen biosynthesis.</text>
</comment>
<comment type="similarity">
    <text evidence="1">Belongs to the glycosyltransferase 1 family. Bacterial/plant glycogen synthase subfamily.</text>
</comment>
<dbReference type="EC" id="2.4.1.21" evidence="1"/>
<dbReference type="EMBL" id="CP000490">
    <property type="protein sequence ID" value="ABL72490.1"/>
    <property type="molecule type" value="Genomic_DNA"/>
</dbReference>
<dbReference type="RefSeq" id="WP_011750652.1">
    <property type="nucleotide sequence ID" value="NC_008687.1"/>
</dbReference>
<dbReference type="SMR" id="A1BAE6"/>
<dbReference type="STRING" id="318586.Pden_4426"/>
<dbReference type="CAZy" id="GT5">
    <property type="family name" value="Glycosyltransferase Family 5"/>
</dbReference>
<dbReference type="EnsemblBacteria" id="ABL72490">
    <property type="protein sequence ID" value="ABL72490"/>
    <property type="gene ID" value="Pden_4426"/>
</dbReference>
<dbReference type="GeneID" id="93454090"/>
<dbReference type="KEGG" id="pde:Pden_4426"/>
<dbReference type="eggNOG" id="COG0297">
    <property type="taxonomic scope" value="Bacteria"/>
</dbReference>
<dbReference type="HOGENOM" id="CLU_009583_18_4_5"/>
<dbReference type="OrthoDB" id="9808590at2"/>
<dbReference type="UniPathway" id="UPA00164"/>
<dbReference type="Proteomes" id="UP000000361">
    <property type="component" value="Chromosome 2"/>
</dbReference>
<dbReference type="GO" id="GO:0005829">
    <property type="term" value="C:cytosol"/>
    <property type="evidence" value="ECO:0007669"/>
    <property type="project" value="TreeGrafter"/>
</dbReference>
<dbReference type="GO" id="GO:0009011">
    <property type="term" value="F:alpha-1,4-glucan glucosyltransferase (ADP-glucose donor) activity"/>
    <property type="evidence" value="ECO:0007669"/>
    <property type="project" value="UniProtKB-UniRule"/>
</dbReference>
<dbReference type="GO" id="GO:0004373">
    <property type="term" value="F:alpha-1,4-glucan glucosyltransferase (UDP-glucose donor) activity"/>
    <property type="evidence" value="ECO:0007669"/>
    <property type="project" value="InterPro"/>
</dbReference>
<dbReference type="GO" id="GO:0005978">
    <property type="term" value="P:glycogen biosynthetic process"/>
    <property type="evidence" value="ECO:0007669"/>
    <property type="project" value="UniProtKB-UniRule"/>
</dbReference>
<dbReference type="CDD" id="cd03791">
    <property type="entry name" value="GT5_Glycogen_synthase_DULL1-like"/>
    <property type="match status" value="1"/>
</dbReference>
<dbReference type="Gene3D" id="3.40.50.2000">
    <property type="entry name" value="Glycogen Phosphorylase B"/>
    <property type="match status" value="2"/>
</dbReference>
<dbReference type="HAMAP" id="MF_00484">
    <property type="entry name" value="Glycogen_synth"/>
    <property type="match status" value="1"/>
</dbReference>
<dbReference type="InterPro" id="IPR001296">
    <property type="entry name" value="Glyco_trans_1"/>
</dbReference>
<dbReference type="InterPro" id="IPR011835">
    <property type="entry name" value="GS/SS"/>
</dbReference>
<dbReference type="InterPro" id="IPR013534">
    <property type="entry name" value="Starch_synth_cat_dom"/>
</dbReference>
<dbReference type="NCBIfam" id="TIGR02095">
    <property type="entry name" value="glgA"/>
    <property type="match status" value="1"/>
</dbReference>
<dbReference type="NCBIfam" id="NF001899">
    <property type="entry name" value="PRK00654.1-2"/>
    <property type="match status" value="1"/>
</dbReference>
<dbReference type="PANTHER" id="PTHR45825:SF11">
    <property type="entry name" value="ALPHA AMYLASE DOMAIN-CONTAINING PROTEIN"/>
    <property type="match status" value="1"/>
</dbReference>
<dbReference type="PANTHER" id="PTHR45825">
    <property type="entry name" value="GRANULE-BOUND STARCH SYNTHASE 1, CHLOROPLASTIC/AMYLOPLASTIC"/>
    <property type="match status" value="1"/>
</dbReference>
<dbReference type="Pfam" id="PF08323">
    <property type="entry name" value="Glyco_transf_5"/>
    <property type="match status" value="1"/>
</dbReference>
<dbReference type="Pfam" id="PF00534">
    <property type="entry name" value="Glycos_transf_1"/>
    <property type="match status" value="1"/>
</dbReference>
<dbReference type="SUPFAM" id="SSF53756">
    <property type="entry name" value="UDP-Glycosyltransferase/glycogen phosphorylase"/>
    <property type="match status" value="1"/>
</dbReference>
<organism>
    <name type="scientific">Paracoccus denitrificans (strain Pd 1222)</name>
    <dbReference type="NCBI Taxonomy" id="318586"/>
    <lineage>
        <taxon>Bacteria</taxon>
        <taxon>Pseudomonadati</taxon>
        <taxon>Pseudomonadota</taxon>
        <taxon>Alphaproteobacteria</taxon>
        <taxon>Rhodobacterales</taxon>
        <taxon>Paracoccaceae</taxon>
        <taxon>Paracoccus</taxon>
    </lineage>
</organism>
<feature type="chain" id="PRO_1000014371" description="Glycogen synthase">
    <location>
        <begin position="1"/>
        <end position="467"/>
    </location>
</feature>
<feature type="binding site" evidence="1">
    <location>
        <position position="16"/>
    </location>
    <ligand>
        <name>ADP-alpha-D-glucose</name>
        <dbReference type="ChEBI" id="CHEBI:57498"/>
    </ligand>
</feature>
<sequence>MTRVLSVASECVPLVKTGGLADVAGALPAALAGQGVGMRVLLPGYPAVLGAAAKTPVLREIPDLFGGPARIRRGALGKAVLYILDAPHLFDRPGGIYLGPDGRDWPDNPQRFAALCKAAALIAAEGVEDWRPQVLHLHDWQAGLTPIYLRQAGVRDVRTLLTIHNIAFQGLAPAHMLSALQLPAHLFNPSGFEYWGRISALKAGIVFADKVSTVSPTYAEELMTPEFGMGMEGVLADRAGDFTGILNGIDLDAWKPPYATPQGKAPHRAALRKEFGLPETDGPLCVVVSRLTGQKGLDLLIEALPALLENGGQLAVLGSGDPGLEAAFAKAAARHAGVALRLGYDEALSRRMIAGGDAILVPSRFEPCGLTQLYGLRFGTLPLVALTGGLADTVINASVAGLAAGVATGVQFHPVDARTLSRALTRLCALWHQPAAWQRMMDNAMAHPVGWDASARAYAELFEAMAA</sequence>